<proteinExistence type="inferred from homology"/>
<comment type="catalytic activity">
    <reaction evidence="1">
        <text>2-(N(omega)-L-arginino)succinate = fumarate + L-arginine</text>
        <dbReference type="Rhea" id="RHEA:24020"/>
        <dbReference type="ChEBI" id="CHEBI:29806"/>
        <dbReference type="ChEBI" id="CHEBI:32682"/>
        <dbReference type="ChEBI" id="CHEBI:57472"/>
        <dbReference type="EC" id="4.3.2.1"/>
    </reaction>
</comment>
<comment type="pathway">
    <text evidence="1">Amino-acid biosynthesis; L-arginine biosynthesis; L-arginine from L-ornithine and carbamoyl phosphate: step 3/3.</text>
</comment>
<comment type="subcellular location">
    <subcellularLocation>
        <location evidence="1">Cytoplasm</location>
    </subcellularLocation>
</comment>
<comment type="similarity">
    <text evidence="1">Belongs to the lyase 1 family. Argininosuccinate lyase subfamily.</text>
</comment>
<evidence type="ECO:0000255" key="1">
    <source>
        <dbReference type="HAMAP-Rule" id="MF_00006"/>
    </source>
</evidence>
<protein>
    <recommendedName>
        <fullName evidence="1">Argininosuccinate lyase</fullName>
        <shortName evidence="1">ASAL</shortName>
        <ecNumber evidence="1">4.3.2.1</ecNumber>
    </recommendedName>
    <alternativeName>
        <fullName evidence="1">Arginosuccinase</fullName>
    </alternativeName>
</protein>
<sequence>MKLWGGRFKSETDKLMEEFNSSISFDIRLLKHDILGSIAHAKGLYKAGVLTEDELNLIEKGLKEILDETNVGEIPNDEDVHSYVERLLTEKIGDVGRKLHTGRSRNDQVATDERLYLRDEIDKIKEDLIKLIDTLKEMAETYKKAIMPGYTHLQRAQPVTFGHHLLAYVEMFKRDLSRLEDMYKRVNVMPLGSGALAGTTFDIDRKYVASLLGFDDITLNSMDGVSDRDFVIEFLSFASITMMHLSRFCEELILWSTKEFDFIEMDDRFSTGSSMMPQKKNPDAAELIRGKTGRVYGDLITILTVMKGLSLAYNKDMQEDKEALFDGIDTLKMSLKVFTEMIKTIKVKTDNMEKAAKYGYMNATDFADYLVSKGIPFRTAHEIAGKVVLYAIERNLAIEDLPLNELKKFSDVIDEDVYEAIDLKNTLKKKKTIGAPTSIQS</sequence>
<reference key="1">
    <citation type="submission" date="2008-01" db="EMBL/GenBank/DDBJ databases">
        <title>Complete sequence of Thermoanaerobacter pseudethanolicus 39E.</title>
        <authorList>
            <person name="Copeland A."/>
            <person name="Lucas S."/>
            <person name="Lapidus A."/>
            <person name="Barry K."/>
            <person name="Glavina del Rio T."/>
            <person name="Dalin E."/>
            <person name="Tice H."/>
            <person name="Pitluck S."/>
            <person name="Bruce D."/>
            <person name="Goodwin L."/>
            <person name="Saunders E."/>
            <person name="Brettin T."/>
            <person name="Detter J.C."/>
            <person name="Han C."/>
            <person name="Schmutz J."/>
            <person name="Larimer F."/>
            <person name="Land M."/>
            <person name="Hauser L."/>
            <person name="Kyrpides N."/>
            <person name="Lykidis A."/>
            <person name="Hemme C."/>
            <person name="Fields M.W."/>
            <person name="He Z."/>
            <person name="Zhou J."/>
            <person name="Richardson P."/>
        </authorList>
    </citation>
    <scope>NUCLEOTIDE SEQUENCE [LARGE SCALE GENOMIC DNA]</scope>
    <source>
        <strain>ATCC 33223 / DSM 2355 / 39E</strain>
    </source>
</reference>
<organism>
    <name type="scientific">Thermoanaerobacter pseudethanolicus (strain ATCC 33223 / 39E)</name>
    <name type="common">Clostridium thermohydrosulfuricum</name>
    <dbReference type="NCBI Taxonomy" id="340099"/>
    <lineage>
        <taxon>Bacteria</taxon>
        <taxon>Bacillati</taxon>
        <taxon>Bacillota</taxon>
        <taxon>Clostridia</taxon>
        <taxon>Thermoanaerobacterales</taxon>
        <taxon>Thermoanaerobacteraceae</taxon>
        <taxon>Thermoanaerobacter</taxon>
    </lineage>
</organism>
<dbReference type="EC" id="4.3.2.1" evidence="1"/>
<dbReference type="EMBL" id="CP000924">
    <property type="protein sequence ID" value="ABY93902.1"/>
    <property type="molecule type" value="Genomic_DNA"/>
</dbReference>
<dbReference type="RefSeq" id="WP_003868143.1">
    <property type="nucleotide sequence ID" value="NC_010321.1"/>
</dbReference>
<dbReference type="SMR" id="B0KBW6"/>
<dbReference type="STRING" id="340099.Teth39_0230"/>
<dbReference type="KEGG" id="tpd:Teth39_0230"/>
<dbReference type="eggNOG" id="COG0165">
    <property type="taxonomic scope" value="Bacteria"/>
</dbReference>
<dbReference type="HOGENOM" id="CLU_027272_2_3_9"/>
<dbReference type="UniPathway" id="UPA00068">
    <property type="reaction ID" value="UER00114"/>
</dbReference>
<dbReference type="Proteomes" id="UP000002156">
    <property type="component" value="Chromosome"/>
</dbReference>
<dbReference type="GO" id="GO:0005829">
    <property type="term" value="C:cytosol"/>
    <property type="evidence" value="ECO:0007669"/>
    <property type="project" value="TreeGrafter"/>
</dbReference>
<dbReference type="GO" id="GO:0004056">
    <property type="term" value="F:argininosuccinate lyase activity"/>
    <property type="evidence" value="ECO:0007669"/>
    <property type="project" value="UniProtKB-UniRule"/>
</dbReference>
<dbReference type="GO" id="GO:0042450">
    <property type="term" value="P:arginine biosynthetic process via ornithine"/>
    <property type="evidence" value="ECO:0007669"/>
    <property type="project" value="InterPro"/>
</dbReference>
<dbReference type="GO" id="GO:0006526">
    <property type="term" value="P:L-arginine biosynthetic process"/>
    <property type="evidence" value="ECO:0007669"/>
    <property type="project" value="UniProtKB-UniRule"/>
</dbReference>
<dbReference type="CDD" id="cd01359">
    <property type="entry name" value="Argininosuccinate_lyase"/>
    <property type="match status" value="1"/>
</dbReference>
<dbReference type="FunFam" id="1.10.275.10:FF:000002">
    <property type="entry name" value="Argininosuccinate lyase"/>
    <property type="match status" value="1"/>
</dbReference>
<dbReference type="FunFam" id="1.10.40.30:FF:000001">
    <property type="entry name" value="Argininosuccinate lyase"/>
    <property type="match status" value="1"/>
</dbReference>
<dbReference type="FunFam" id="1.20.200.10:FF:000006">
    <property type="entry name" value="Argininosuccinate lyase"/>
    <property type="match status" value="1"/>
</dbReference>
<dbReference type="Gene3D" id="1.10.40.30">
    <property type="entry name" value="Fumarase/aspartase (C-terminal domain)"/>
    <property type="match status" value="1"/>
</dbReference>
<dbReference type="Gene3D" id="1.20.200.10">
    <property type="entry name" value="Fumarase/aspartase (Central domain)"/>
    <property type="match status" value="1"/>
</dbReference>
<dbReference type="Gene3D" id="1.10.275.10">
    <property type="entry name" value="Fumarase/aspartase (N-terminal domain)"/>
    <property type="match status" value="1"/>
</dbReference>
<dbReference type="HAMAP" id="MF_00006">
    <property type="entry name" value="Arg_succ_lyase"/>
    <property type="match status" value="1"/>
</dbReference>
<dbReference type="InterPro" id="IPR029419">
    <property type="entry name" value="Arg_succ_lyase_C"/>
</dbReference>
<dbReference type="InterPro" id="IPR009049">
    <property type="entry name" value="Argininosuccinate_lyase"/>
</dbReference>
<dbReference type="InterPro" id="IPR024083">
    <property type="entry name" value="Fumarase/histidase_N"/>
</dbReference>
<dbReference type="InterPro" id="IPR020557">
    <property type="entry name" value="Fumarate_lyase_CS"/>
</dbReference>
<dbReference type="InterPro" id="IPR000362">
    <property type="entry name" value="Fumarate_lyase_fam"/>
</dbReference>
<dbReference type="InterPro" id="IPR022761">
    <property type="entry name" value="Fumarate_lyase_N"/>
</dbReference>
<dbReference type="InterPro" id="IPR008948">
    <property type="entry name" value="L-Aspartase-like"/>
</dbReference>
<dbReference type="NCBIfam" id="TIGR00838">
    <property type="entry name" value="argH"/>
    <property type="match status" value="1"/>
</dbReference>
<dbReference type="PANTHER" id="PTHR43814">
    <property type="entry name" value="ARGININOSUCCINATE LYASE"/>
    <property type="match status" value="1"/>
</dbReference>
<dbReference type="PANTHER" id="PTHR43814:SF1">
    <property type="entry name" value="ARGININOSUCCINATE LYASE"/>
    <property type="match status" value="1"/>
</dbReference>
<dbReference type="Pfam" id="PF14698">
    <property type="entry name" value="ASL_C2"/>
    <property type="match status" value="1"/>
</dbReference>
<dbReference type="Pfam" id="PF00206">
    <property type="entry name" value="Lyase_1"/>
    <property type="match status" value="1"/>
</dbReference>
<dbReference type="PRINTS" id="PR00145">
    <property type="entry name" value="ARGSUCLYASE"/>
</dbReference>
<dbReference type="PRINTS" id="PR00149">
    <property type="entry name" value="FUMRATELYASE"/>
</dbReference>
<dbReference type="SUPFAM" id="SSF48557">
    <property type="entry name" value="L-aspartase-like"/>
    <property type="match status" value="1"/>
</dbReference>
<dbReference type="PROSITE" id="PS00163">
    <property type="entry name" value="FUMARATE_LYASES"/>
    <property type="match status" value="1"/>
</dbReference>
<keyword id="KW-0028">Amino-acid biosynthesis</keyword>
<keyword id="KW-0055">Arginine biosynthesis</keyword>
<keyword id="KW-0963">Cytoplasm</keyword>
<keyword id="KW-0456">Lyase</keyword>
<keyword id="KW-1185">Reference proteome</keyword>
<accession>B0KBW6</accession>
<name>ARLY_THEP3</name>
<gene>
    <name evidence="1" type="primary">argH</name>
    <name type="ordered locus">Teth39_0230</name>
</gene>
<feature type="chain" id="PRO_1000089125" description="Argininosuccinate lyase">
    <location>
        <begin position="1"/>
        <end position="441"/>
    </location>
</feature>